<protein>
    <recommendedName>
        <fullName evidence="1">1,4-alpha-glucan branching enzyme GlgB</fullName>
        <ecNumber evidence="1">2.4.1.18</ecNumber>
    </recommendedName>
    <alternativeName>
        <fullName evidence="1">1,4-alpha-D-glucan:1,4-alpha-D-glucan 6-glucosyl-transferase</fullName>
    </alternativeName>
    <alternativeName>
        <fullName evidence="1">Alpha-(1-&gt;4)-glucan branching enzyme</fullName>
    </alternativeName>
    <alternativeName>
        <fullName evidence="1">Glycogen branching enzyme</fullName>
        <shortName evidence="1">BE</shortName>
    </alternativeName>
</protein>
<organism>
    <name type="scientific">Serratia proteamaculans (strain 568)</name>
    <dbReference type="NCBI Taxonomy" id="399741"/>
    <lineage>
        <taxon>Bacteria</taxon>
        <taxon>Pseudomonadati</taxon>
        <taxon>Pseudomonadota</taxon>
        <taxon>Gammaproteobacteria</taxon>
        <taxon>Enterobacterales</taxon>
        <taxon>Yersiniaceae</taxon>
        <taxon>Serratia</taxon>
    </lineage>
</organism>
<keyword id="KW-0119">Carbohydrate metabolism</keyword>
<keyword id="KW-0320">Glycogen biosynthesis</keyword>
<keyword id="KW-0321">Glycogen metabolism</keyword>
<keyword id="KW-0328">Glycosyltransferase</keyword>
<keyword id="KW-0808">Transferase</keyword>
<comment type="function">
    <text evidence="1">Catalyzes the formation of the alpha-1,6-glucosidic linkages in glycogen by scission of a 1,4-alpha-linked oligosaccharide from growing alpha-1,4-glucan chains and the subsequent attachment of the oligosaccharide to the alpha-1,6 position.</text>
</comment>
<comment type="catalytic activity">
    <reaction evidence="1">
        <text>Transfers a segment of a (1-&gt;4)-alpha-D-glucan chain to a primary hydroxy group in a similar glucan chain.</text>
        <dbReference type="EC" id="2.4.1.18"/>
    </reaction>
</comment>
<comment type="pathway">
    <text evidence="1">Glycan biosynthesis; glycogen biosynthesis.</text>
</comment>
<comment type="subunit">
    <text evidence="1">Monomer.</text>
</comment>
<comment type="similarity">
    <text evidence="1">Belongs to the glycosyl hydrolase 13 family. GlgB subfamily.</text>
</comment>
<feature type="chain" id="PRO_1000061993" description="1,4-alpha-glucan branching enzyme GlgB">
    <location>
        <begin position="1"/>
        <end position="728"/>
    </location>
</feature>
<feature type="active site" description="Nucleophile" evidence="1">
    <location>
        <position position="405"/>
    </location>
</feature>
<feature type="active site" description="Proton donor" evidence="1">
    <location>
        <position position="458"/>
    </location>
</feature>
<proteinExistence type="inferred from homology"/>
<sequence length="728" mass="83974">MPVLPDRDVIDQLFSGNSADPFSLLGMHAADNGLQVRALLPDASEVWLLEQQTGRRLVQLNCDDARGFFSATVPRRKTPFRYQFEVRWQDHQQIVDDPYRFGTLLQDIDSWLLAEGTHLRPYERLGAHLSTLDDVEGVSFAVWAPNAQRVSVVGEFNFWDGRRHPMRLRRENGIWELFLPGVKAGQLYKYEIIDCYGNTQLKADPYAFEAQMRPDTASLVTPLPEVVENTPQRQRANDFDRPISIYEVHLGSWRRHTDDNFWLSYGELAVQLIDYVKDMGFTHIELLPINEHPFDGSWGYQPLGLYAPTRRFGTPADFKDFVAAAHRAGINVILDWVPGHFPSDAYGLANFDGTALYEYADPREGFHQDWNTLIYNYGRHEVRNYLAGNALYWLERYGIDALRVDAVASMIYRDYSRAEGEWVPNYYGGNENLEAIAFLRYTNQSVGKERPGAVTLAEESTDYPGVTLPPESNGLGFHYKWNLGWMHDTLNYMQCDPVHRKYHHNQMTFGMLYAYTENFVLPISHDEVVHGKKSILDRMPGDAWQKFANLRAYYGFMWAHPGKKLLFMGCEFAQGREWNFDSSLDWHLLEGLDGWHHGVQRLVRDLNHCYQQQAPLYERDYRPDGFEWLVVDDHDNSVFAFARYDAHGNELIAVSNFTPVPRHHYRIGISRPGEYREILNTDSHHYHGSNTGNQGRVVSEQIGNHGREHSISVTVPPLATIYLLREAQ</sequence>
<accession>A8GKV0</accession>
<reference key="1">
    <citation type="submission" date="2007-09" db="EMBL/GenBank/DDBJ databases">
        <title>Complete sequence of chromosome of Serratia proteamaculans 568.</title>
        <authorList>
            <consortium name="US DOE Joint Genome Institute"/>
            <person name="Copeland A."/>
            <person name="Lucas S."/>
            <person name="Lapidus A."/>
            <person name="Barry K."/>
            <person name="Glavina del Rio T."/>
            <person name="Dalin E."/>
            <person name="Tice H."/>
            <person name="Pitluck S."/>
            <person name="Chain P."/>
            <person name="Malfatti S."/>
            <person name="Shin M."/>
            <person name="Vergez L."/>
            <person name="Schmutz J."/>
            <person name="Larimer F."/>
            <person name="Land M."/>
            <person name="Hauser L."/>
            <person name="Kyrpides N."/>
            <person name="Kim E."/>
            <person name="Taghavi S."/>
            <person name="Newman L."/>
            <person name="Vangronsveld J."/>
            <person name="van der Lelie D."/>
            <person name="Richardson P."/>
        </authorList>
    </citation>
    <scope>NUCLEOTIDE SEQUENCE [LARGE SCALE GENOMIC DNA]</scope>
    <source>
        <strain>568</strain>
    </source>
</reference>
<name>GLGB_SERP5</name>
<dbReference type="EC" id="2.4.1.18" evidence="1"/>
<dbReference type="EMBL" id="CP000826">
    <property type="protein sequence ID" value="ABV43740.1"/>
    <property type="molecule type" value="Genomic_DNA"/>
</dbReference>
<dbReference type="SMR" id="A8GKV0"/>
<dbReference type="STRING" id="399741.Spro_4647"/>
<dbReference type="CAZy" id="CBM48">
    <property type="family name" value="Carbohydrate-Binding Module Family 48"/>
</dbReference>
<dbReference type="CAZy" id="GH13">
    <property type="family name" value="Glycoside Hydrolase Family 13"/>
</dbReference>
<dbReference type="KEGG" id="spe:Spro_4647"/>
<dbReference type="eggNOG" id="COG0296">
    <property type="taxonomic scope" value="Bacteria"/>
</dbReference>
<dbReference type="HOGENOM" id="CLU_004245_3_2_6"/>
<dbReference type="OrthoDB" id="9800174at2"/>
<dbReference type="UniPathway" id="UPA00164"/>
<dbReference type="GO" id="GO:0005829">
    <property type="term" value="C:cytosol"/>
    <property type="evidence" value="ECO:0007669"/>
    <property type="project" value="TreeGrafter"/>
</dbReference>
<dbReference type="GO" id="GO:0003844">
    <property type="term" value="F:1,4-alpha-glucan branching enzyme activity"/>
    <property type="evidence" value="ECO:0007669"/>
    <property type="project" value="UniProtKB-UniRule"/>
</dbReference>
<dbReference type="GO" id="GO:0043169">
    <property type="term" value="F:cation binding"/>
    <property type="evidence" value="ECO:0007669"/>
    <property type="project" value="InterPro"/>
</dbReference>
<dbReference type="GO" id="GO:0004553">
    <property type="term" value="F:hydrolase activity, hydrolyzing O-glycosyl compounds"/>
    <property type="evidence" value="ECO:0007669"/>
    <property type="project" value="InterPro"/>
</dbReference>
<dbReference type="GO" id="GO:0005978">
    <property type="term" value="P:glycogen biosynthetic process"/>
    <property type="evidence" value="ECO:0007669"/>
    <property type="project" value="UniProtKB-UniRule"/>
</dbReference>
<dbReference type="CDD" id="cd11322">
    <property type="entry name" value="AmyAc_Glg_BE"/>
    <property type="match status" value="1"/>
</dbReference>
<dbReference type="CDD" id="cd02855">
    <property type="entry name" value="E_set_GBE_prok_N"/>
    <property type="match status" value="1"/>
</dbReference>
<dbReference type="FunFam" id="2.60.40.10:FF:000169">
    <property type="entry name" value="1,4-alpha-glucan branching enzyme GlgB"/>
    <property type="match status" value="1"/>
</dbReference>
<dbReference type="FunFam" id="2.60.40.1180:FF:000002">
    <property type="entry name" value="1,4-alpha-glucan branching enzyme GlgB"/>
    <property type="match status" value="1"/>
</dbReference>
<dbReference type="FunFam" id="3.20.20.80:FF:000003">
    <property type="entry name" value="1,4-alpha-glucan branching enzyme GlgB"/>
    <property type="match status" value="1"/>
</dbReference>
<dbReference type="Gene3D" id="3.20.20.80">
    <property type="entry name" value="Glycosidases"/>
    <property type="match status" value="1"/>
</dbReference>
<dbReference type="Gene3D" id="2.60.40.1180">
    <property type="entry name" value="Golgi alpha-mannosidase II"/>
    <property type="match status" value="1"/>
</dbReference>
<dbReference type="Gene3D" id="2.60.40.10">
    <property type="entry name" value="Immunoglobulins"/>
    <property type="match status" value="2"/>
</dbReference>
<dbReference type="HAMAP" id="MF_00685">
    <property type="entry name" value="GlgB"/>
    <property type="match status" value="1"/>
</dbReference>
<dbReference type="InterPro" id="IPR006048">
    <property type="entry name" value="A-amylase/branching_C"/>
</dbReference>
<dbReference type="InterPro" id="IPR037439">
    <property type="entry name" value="Branching_enzy"/>
</dbReference>
<dbReference type="InterPro" id="IPR006407">
    <property type="entry name" value="GlgB"/>
</dbReference>
<dbReference type="InterPro" id="IPR054169">
    <property type="entry name" value="GlgB_N"/>
</dbReference>
<dbReference type="InterPro" id="IPR044143">
    <property type="entry name" value="GlgB_N_E_set_prok"/>
</dbReference>
<dbReference type="InterPro" id="IPR006047">
    <property type="entry name" value="Glyco_hydro_13_cat_dom"/>
</dbReference>
<dbReference type="InterPro" id="IPR004193">
    <property type="entry name" value="Glyco_hydro_13_N"/>
</dbReference>
<dbReference type="InterPro" id="IPR013780">
    <property type="entry name" value="Glyco_hydro_b"/>
</dbReference>
<dbReference type="InterPro" id="IPR017853">
    <property type="entry name" value="Glycoside_hydrolase_SF"/>
</dbReference>
<dbReference type="InterPro" id="IPR013783">
    <property type="entry name" value="Ig-like_fold"/>
</dbReference>
<dbReference type="InterPro" id="IPR014756">
    <property type="entry name" value="Ig_E-set"/>
</dbReference>
<dbReference type="NCBIfam" id="TIGR01515">
    <property type="entry name" value="branching_enzym"/>
    <property type="match status" value="1"/>
</dbReference>
<dbReference type="NCBIfam" id="NF003811">
    <property type="entry name" value="PRK05402.1"/>
    <property type="match status" value="1"/>
</dbReference>
<dbReference type="NCBIfam" id="NF008967">
    <property type="entry name" value="PRK12313.1"/>
    <property type="match status" value="1"/>
</dbReference>
<dbReference type="PANTHER" id="PTHR43651">
    <property type="entry name" value="1,4-ALPHA-GLUCAN-BRANCHING ENZYME"/>
    <property type="match status" value="1"/>
</dbReference>
<dbReference type="PANTHER" id="PTHR43651:SF3">
    <property type="entry name" value="1,4-ALPHA-GLUCAN-BRANCHING ENZYME"/>
    <property type="match status" value="1"/>
</dbReference>
<dbReference type="Pfam" id="PF00128">
    <property type="entry name" value="Alpha-amylase"/>
    <property type="match status" value="1"/>
</dbReference>
<dbReference type="Pfam" id="PF02806">
    <property type="entry name" value="Alpha-amylase_C"/>
    <property type="match status" value="1"/>
</dbReference>
<dbReference type="Pfam" id="PF02922">
    <property type="entry name" value="CBM_48"/>
    <property type="match status" value="1"/>
</dbReference>
<dbReference type="Pfam" id="PF22019">
    <property type="entry name" value="GlgB_N"/>
    <property type="match status" value="1"/>
</dbReference>
<dbReference type="PIRSF" id="PIRSF000463">
    <property type="entry name" value="GlgB"/>
    <property type="match status" value="1"/>
</dbReference>
<dbReference type="SMART" id="SM00642">
    <property type="entry name" value="Aamy"/>
    <property type="match status" value="1"/>
</dbReference>
<dbReference type="SUPFAM" id="SSF51445">
    <property type="entry name" value="(Trans)glycosidases"/>
    <property type="match status" value="1"/>
</dbReference>
<dbReference type="SUPFAM" id="SSF81296">
    <property type="entry name" value="E set domains"/>
    <property type="match status" value="2"/>
</dbReference>
<dbReference type="SUPFAM" id="SSF51011">
    <property type="entry name" value="Glycosyl hydrolase domain"/>
    <property type="match status" value="1"/>
</dbReference>
<evidence type="ECO:0000255" key="1">
    <source>
        <dbReference type="HAMAP-Rule" id="MF_00685"/>
    </source>
</evidence>
<gene>
    <name evidence="1" type="primary">glgB</name>
    <name type="ordered locus">Spro_4647</name>
</gene>